<accession>Q8PJY5</accession>
<keyword id="KW-0067">ATP-binding</keyword>
<keyword id="KW-0460">Magnesium</keyword>
<keyword id="KW-0464">Manganese</keyword>
<keyword id="KW-0479">Metal-binding</keyword>
<keyword id="KW-0547">Nucleotide-binding</keyword>
<keyword id="KW-0548">Nucleotidyltransferase</keyword>
<keyword id="KW-0808">Transferase</keyword>
<proteinExistence type="inferred from homology"/>
<comment type="function">
    <text evidence="1">Nucleotidyltransferase involved in the post-translational modification of proteins. It can catalyze the addition of adenosine monophosphate (AMP) or uridine monophosphate (UMP) to a protein, resulting in modifications known as AMPylation and UMPylation.</text>
</comment>
<comment type="catalytic activity">
    <reaction evidence="1">
        <text>L-seryl-[protein] + ATP = 3-O-(5'-adenylyl)-L-seryl-[protein] + diphosphate</text>
        <dbReference type="Rhea" id="RHEA:58120"/>
        <dbReference type="Rhea" id="RHEA-COMP:9863"/>
        <dbReference type="Rhea" id="RHEA-COMP:15073"/>
        <dbReference type="ChEBI" id="CHEBI:29999"/>
        <dbReference type="ChEBI" id="CHEBI:30616"/>
        <dbReference type="ChEBI" id="CHEBI:33019"/>
        <dbReference type="ChEBI" id="CHEBI:142516"/>
        <dbReference type="EC" id="2.7.7.108"/>
    </reaction>
</comment>
<comment type="catalytic activity">
    <reaction evidence="1">
        <text>L-threonyl-[protein] + ATP = 3-O-(5'-adenylyl)-L-threonyl-[protein] + diphosphate</text>
        <dbReference type="Rhea" id="RHEA:54292"/>
        <dbReference type="Rhea" id="RHEA-COMP:11060"/>
        <dbReference type="Rhea" id="RHEA-COMP:13847"/>
        <dbReference type="ChEBI" id="CHEBI:30013"/>
        <dbReference type="ChEBI" id="CHEBI:30616"/>
        <dbReference type="ChEBI" id="CHEBI:33019"/>
        <dbReference type="ChEBI" id="CHEBI:138113"/>
        <dbReference type="EC" id="2.7.7.108"/>
    </reaction>
</comment>
<comment type="catalytic activity">
    <reaction evidence="1">
        <text>L-tyrosyl-[protein] + ATP = O-(5'-adenylyl)-L-tyrosyl-[protein] + diphosphate</text>
        <dbReference type="Rhea" id="RHEA:54288"/>
        <dbReference type="Rhea" id="RHEA-COMP:10136"/>
        <dbReference type="Rhea" id="RHEA-COMP:13846"/>
        <dbReference type="ChEBI" id="CHEBI:30616"/>
        <dbReference type="ChEBI" id="CHEBI:33019"/>
        <dbReference type="ChEBI" id="CHEBI:46858"/>
        <dbReference type="ChEBI" id="CHEBI:83624"/>
        <dbReference type="EC" id="2.7.7.108"/>
    </reaction>
</comment>
<comment type="catalytic activity">
    <reaction evidence="1">
        <text>L-histidyl-[protein] + UTP = N(tele)-(5'-uridylyl)-L-histidyl-[protein] + diphosphate</text>
        <dbReference type="Rhea" id="RHEA:83891"/>
        <dbReference type="Rhea" id="RHEA-COMP:9745"/>
        <dbReference type="Rhea" id="RHEA-COMP:20239"/>
        <dbReference type="ChEBI" id="CHEBI:29979"/>
        <dbReference type="ChEBI" id="CHEBI:33019"/>
        <dbReference type="ChEBI" id="CHEBI:46398"/>
        <dbReference type="ChEBI" id="CHEBI:233474"/>
    </reaction>
</comment>
<comment type="catalytic activity">
    <reaction evidence="1">
        <text>L-seryl-[protein] + UTP = O-(5'-uridylyl)-L-seryl-[protein] + diphosphate</text>
        <dbReference type="Rhea" id="RHEA:64604"/>
        <dbReference type="Rhea" id="RHEA-COMP:9863"/>
        <dbReference type="Rhea" id="RHEA-COMP:16635"/>
        <dbReference type="ChEBI" id="CHEBI:29999"/>
        <dbReference type="ChEBI" id="CHEBI:33019"/>
        <dbReference type="ChEBI" id="CHEBI:46398"/>
        <dbReference type="ChEBI" id="CHEBI:156051"/>
    </reaction>
</comment>
<comment type="catalytic activity">
    <reaction evidence="1">
        <text>L-tyrosyl-[protein] + UTP = O-(5'-uridylyl)-L-tyrosyl-[protein] + diphosphate</text>
        <dbReference type="Rhea" id="RHEA:83887"/>
        <dbReference type="Rhea" id="RHEA-COMP:10136"/>
        <dbReference type="Rhea" id="RHEA-COMP:20238"/>
        <dbReference type="ChEBI" id="CHEBI:33019"/>
        <dbReference type="ChEBI" id="CHEBI:46398"/>
        <dbReference type="ChEBI" id="CHEBI:46858"/>
        <dbReference type="ChEBI" id="CHEBI:90602"/>
    </reaction>
</comment>
<comment type="cofactor">
    <cofactor evidence="1">
        <name>Mg(2+)</name>
        <dbReference type="ChEBI" id="CHEBI:18420"/>
    </cofactor>
    <cofactor evidence="1">
        <name>Mn(2+)</name>
        <dbReference type="ChEBI" id="CHEBI:29035"/>
    </cofactor>
</comment>
<comment type="similarity">
    <text evidence="1">Belongs to the SELO family.</text>
</comment>
<protein>
    <recommendedName>
        <fullName evidence="1">Protein nucleotidyltransferase YdiU</fullName>
        <ecNumber evidence="1">2.7.7.-</ecNumber>
    </recommendedName>
    <alternativeName>
        <fullName evidence="1">Protein adenylyltransferase YdiU</fullName>
        <ecNumber evidence="1">2.7.7.108</ecNumber>
    </alternativeName>
    <alternativeName>
        <fullName evidence="1">Protein uridylyltransferase YdiU</fullName>
        <ecNumber evidence="1">2.7.7.-</ecNumber>
    </alternativeName>
</protein>
<dbReference type="EC" id="2.7.7.-" evidence="1"/>
<dbReference type="EC" id="2.7.7.108" evidence="1"/>
<dbReference type="EMBL" id="AE008923">
    <property type="protein sequence ID" value="AAM37244.1"/>
    <property type="molecule type" value="Genomic_DNA"/>
</dbReference>
<dbReference type="RefSeq" id="WP_011051553.1">
    <property type="nucleotide sequence ID" value="NC_003919.1"/>
</dbReference>
<dbReference type="SMR" id="Q8PJY5"/>
<dbReference type="KEGG" id="xac:XAC2392"/>
<dbReference type="eggNOG" id="COG0397">
    <property type="taxonomic scope" value="Bacteria"/>
</dbReference>
<dbReference type="HOGENOM" id="CLU_010245_4_0_6"/>
<dbReference type="Proteomes" id="UP000000576">
    <property type="component" value="Chromosome"/>
</dbReference>
<dbReference type="GO" id="GO:0070733">
    <property type="term" value="F:AMPylase activity"/>
    <property type="evidence" value="ECO:0007669"/>
    <property type="project" value="RHEA"/>
</dbReference>
<dbReference type="GO" id="GO:0005524">
    <property type="term" value="F:ATP binding"/>
    <property type="evidence" value="ECO:0007669"/>
    <property type="project" value="UniProtKB-UniRule"/>
</dbReference>
<dbReference type="GO" id="GO:0000287">
    <property type="term" value="F:magnesium ion binding"/>
    <property type="evidence" value="ECO:0007669"/>
    <property type="project" value="UniProtKB-UniRule"/>
</dbReference>
<dbReference type="HAMAP" id="MF_00692">
    <property type="entry name" value="YdiU_SelO"/>
    <property type="match status" value="1"/>
</dbReference>
<dbReference type="InterPro" id="IPR003846">
    <property type="entry name" value="SelO"/>
</dbReference>
<dbReference type="NCBIfam" id="NF000658">
    <property type="entry name" value="PRK00029.1"/>
    <property type="match status" value="1"/>
</dbReference>
<dbReference type="PANTHER" id="PTHR32057">
    <property type="entry name" value="PROTEIN ADENYLYLTRANSFERASE SELO, MITOCHONDRIAL"/>
    <property type="match status" value="1"/>
</dbReference>
<dbReference type="PANTHER" id="PTHR32057:SF14">
    <property type="entry name" value="PROTEIN ADENYLYLTRANSFERASE SELO, MITOCHONDRIAL"/>
    <property type="match status" value="1"/>
</dbReference>
<dbReference type="Pfam" id="PF02696">
    <property type="entry name" value="SelO"/>
    <property type="match status" value="1"/>
</dbReference>
<feature type="chain" id="PRO_0000121438" description="Protein nucleotidyltransferase YdiU">
    <location>
        <begin position="1"/>
        <end position="518"/>
    </location>
</feature>
<feature type="region of interest" description="Disordered" evidence="2">
    <location>
        <begin position="1"/>
        <end position="23"/>
    </location>
</feature>
<feature type="compositionally biased region" description="Basic and acidic residues" evidence="2">
    <location>
        <begin position="1"/>
        <end position="10"/>
    </location>
</feature>
<feature type="active site" description="Proton acceptor" evidence="1">
    <location>
        <position position="270"/>
    </location>
</feature>
<feature type="binding site" evidence="1">
    <location>
        <position position="100"/>
    </location>
    <ligand>
        <name>ATP</name>
        <dbReference type="ChEBI" id="CHEBI:30616"/>
    </ligand>
</feature>
<feature type="binding site" evidence="1">
    <location>
        <position position="102"/>
    </location>
    <ligand>
        <name>ATP</name>
        <dbReference type="ChEBI" id="CHEBI:30616"/>
    </ligand>
</feature>
<feature type="binding site" evidence="1">
    <location>
        <position position="103"/>
    </location>
    <ligand>
        <name>ATP</name>
        <dbReference type="ChEBI" id="CHEBI:30616"/>
    </ligand>
</feature>
<feature type="binding site" evidence="1">
    <location>
        <position position="123"/>
    </location>
    <ligand>
        <name>ATP</name>
        <dbReference type="ChEBI" id="CHEBI:30616"/>
    </ligand>
</feature>
<feature type="binding site" evidence="1">
    <location>
        <position position="135"/>
    </location>
    <ligand>
        <name>ATP</name>
        <dbReference type="ChEBI" id="CHEBI:30616"/>
    </ligand>
</feature>
<feature type="binding site" evidence="1">
    <location>
        <position position="136"/>
    </location>
    <ligand>
        <name>ATP</name>
        <dbReference type="ChEBI" id="CHEBI:30616"/>
    </ligand>
</feature>
<feature type="binding site" evidence="1">
    <location>
        <position position="193"/>
    </location>
    <ligand>
        <name>ATP</name>
        <dbReference type="ChEBI" id="CHEBI:30616"/>
    </ligand>
</feature>
<feature type="binding site" evidence="1">
    <location>
        <position position="200"/>
    </location>
    <ligand>
        <name>ATP</name>
        <dbReference type="ChEBI" id="CHEBI:30616"/>
    </ligand>
</feature>
<feature type="binding site" evidence="1">
    <location>
        <position position="271"/>
    </location>
    <ligand>
        <name>Mg(2+)</name>
        <dbReference type="ChEBI" id="CHEBI:18420"/>
    </ligand>
</feature>
<feature type="binding site" evidence="1">
    <location>
        <position position="280"/>
    </location>
    <ligand>
        <name>ATP</name>
        <dbReference type="ChEBI" id="CHEBI:30616"/>
    </ligand>
</feature>
<feature type="binding site" evidence="1">
    <location>
        <position position="280"/>
    </location>
    <ligand>
        <name>Mg(2+)</name>
        <dbReference type="ChEBI" id="CHEBI:18420"/>
    </ligand>
</feature>
<evidence type="ECO:0000255" key="1">
    <source>
        <dbReference type="HAMAP-Rule" id="MF_00692"/>
    </source>
</evidence>
<evidence type="ECO:0000256" key="2">
    <source>
        <dbReference type="SAM" id="MobiDB-lite"/>
    </source>
</evidence>
<organism>
    <name type="scientific">Xanthomonas axonopodis pv. citri (strain 306)</name>
    <dbReference type="NCBI Taxonomy" id="190486"/>
    <lineage>
        <taxon>Bacteria</taxon>
        <taxon>Pseudomonadati</taxon>
        <taxon>Pseudomonadota</taxon>
        <taxon>Gammaproteobacteria</taxon>
        <taxon>Lysobacterales</taxon>
        <taxon>Lysobacteraceae</taxon>
        <taxon>Xanthomonas</taxon>
    </lineage>
</organism>
<sequence>MTHLRFDNRLRQQLPGDPEEGSRRREVSVAWSAVLPTPVAAPSLIAHSAEMAQVLGLDAAEIASAQFAQVFGGNALYPGMQPWAVNYGGHQFGHWAGQLGDGRAISLGEAIGTDGGRYELQLKGAGPTPYSRGADGRAVLRSSIREFLCSEAMHHLGVPTTRALSLVGTGDAVVRDMFYDGHPQREPGAIVCRVAPSFIRFGNFELPSARGDIALLRQWVDFTIARDFPALAGAGEALYAGWFAQVCERTAVMVAHWMRVGFVHGVMNTDNMSILGLTIDYGPYGWVDDYDPDWTPNTTDAQGRRYRFGTQPQVAYWNLGRLAQALAPLFPDQAPLQHGLDRFRDTYLACDRHDTAAKLGLAECRDEDLQLIDALRALMRESEMDMTLTFRGLIDLSPDHPDPAQLREAFYDEDKRVADAPQLQQWLQRYAARLQQDPLPPDARRARMRLANPRYVLRNYLAQQAIDRAEQGDPSGVQELLEVMRHPYDDQPGRDAFAARRPEWARDRAGCSMLSCSS</sequence>
<gene>
    <name evidence="1" type="primary">ydiU</name>
    <name evidence="1" type="synonym">selO</name>
    <name type="ordered locus">XAC2392</name>
</gene>
<reference key="1">
    <citation type="journal article" date="2002" name="Nature">
        <title>Comparison of the genomes of two Xanthomonas pathogens with differing host specificities.</title>
        <authorList>
            <person name="da Silva A.C.R."/>
            <person name="Ferro J.A."/>
            <person name="Reinach F.C."/>
            <person name="Farah C.S."/>
            <person name="Furlan L.R."/>
            <person name="Quaggio R.B."/>
            <person name="Monteiro-Vitorello C.B."/>
            <person name="Van Sluys M.A."/>
            <person name="Almeida N.F. Jr."/>
            <person name="Alves L.M.C."/>
            <person name="do Amaral A.M."/>
            <person name="Bertolini M.C."/>
            <person name="Camargo L.E.A."/>
            <person name="Camarotte G."/>
            <person name="Cannavan F."/>
            <person name="Cardozo J."/>
            <person name="Chambergo F."/>
            <person name="Ciapina L.P."/>
            <person name="Cicarelli R.M.B."/>
            <person name="Coutinho L.L."/>
            <person name="Cursino-Santos J.R."/>
            <person name="El-Dorry H."/>
            <person name="Faria J.B."/>
            <person name="Ferreira A.J.S."/>
            <person name="Ferreira R.C.C."/>
            <person name="Ferro M.I.T."/>
            <person name="Formighieri E.F."/>
            <person name="Franco M.C."/>
            <person name="Greggio C.C."/>
            <person name="Gruber A."/>
            <person name="Katsuyama A.M."/>
            <person name="Kishi L.T."/>
            <person name="Leite R.P."/>
            <person name="Lemos E.G.M."/>
            <person name="Lemos M.V.F."/>
            <person name="Locali E.C."/>
            <person name="Machado M.A."/>
            <person name="Madeira A.M.B.N."/>
            <person name="Martinez-Rossi N.M."/>
            <person name="Martins E.C."/>
            <person name="Meidanis J."/>
            <person name="Menck C.F.M."/>
            <person name="Miyaki C.Y."/>
            <person name="Moon D.H."/>
            <person name="Moreira L.M."/>
            <person name="Novo M.T.M."/>
            <person name="Okura V.K."/>
            <person name="Oliveira M.C."/>
            <person name="Oliveira V.R."/>
            <person name="Pereira H.A."/>
            <person name="Rossi A."/>
            <person name="Sena J.A.D."/>
            <person name="Silva C."/>
            <person name="de Souza R.F."/>
            <person name="Spinola L.A.F."/>
            <person name="Takita M.A."/>
            <person name="Tamura R.E."/>
            <person name="Teixeira E.C."/>
            <person name="Tezza R.I.D."/>
            <person name="Trindade dos Santos M."/>
            <person name="Truffi D."/>
            <person name="Tsai S.M."/>
            <person name="White F.F."/>
            <person name="Setubal J.C."/>
            <person name="Kitajima J.P."/>
        </authorList>
    </citation>
    <scope>NUCLEOTIDE SEQUENCE [LARGE SCALE GENOMIC DNA]</scope>
    <source>
        <strain>306</strain>
    </source>
</reference>
<name>SELO_XANAC</name>